<comment type="function">
    <text evidence="1">Integral membrane transporter that imports quinic acid to be catabolized as a carbon source.</text>
</comment>
<comment type="subunit">
    <text evidence="1">Interacts with creB.</text>
</comment>
<comment type="subcellular location">
    <subcellularLocation>
        <location>Cell membrane</location>
        <topology>Multi-pass membrane protein</topology>
    </subcellularLocation>
    <subcellularLocation>
        <location evidence="3">Cell membrane</location>
    </subcellularLocation>
</comment>
<comment type="PTM">
    <text>Ubiquitinated. Deubiquitinated by creB, probably to control its activity or amount.</text>
</comment>
<comment type="similarity">
    <text evidence="3">Belongs to the major facilitator superfamily. Sugar transporter (TC 2.A.1.1) family.</text>
</comment>
<name>QUTD_ASPNC</name>
<proteinExistence type="inferred from homology"/>
<evidence type="ECO:0000250" key="1"/>
<evidence type="ECO:0000255" key="2"/>
<evidence type="ECO:0000305" key="3"/>
<protein>
    <recommendedName>
        <fullName>Probable quinate permease</fullName>
    </recommendedName>
    <alternativeName>
        <fullName>Quinate transporter</fullName>
    </alternativeName>
</protein>
<gene>
    <name type="primary">qutD</name>
    <name type="ORF">An08g03850</name>
</gene>
<feature type="chain" id="PRO_0000395716" description="Probable quinate permease">
    <location>
        <begin position="1"/>
        <end position="539"/>
    </location>
</feature>
<feature type="topological domain" description="Cytoplasmic" evidence="2">
    <location>
        <begin position="1"/>
        <end position="22"/>
    </location>
</feature>
<feature type="transmembrane region" description="Helical" evidence="2">
    <location>
        <begin position="23"/>
        <end position="43"/>
    </location>
</feature>
<feature type="topological domain" description="Extracellular" evidence="2">
    <location>
        <begin position="44"/>
        <end position="74"/>
    </location>
</feature>
<feature type="transmembrane region" description="Helical" evidence="2">
    <location>
        <begin position="75"/>
        <end position="95"/>
    </location>
</feature>
<feature type="topological domain" description="Cytoplasmic" evidence="2">
    <location>
        <begin position="96"/>
        <end position="97"/>
    </location>
</feature>
<feature type="transmembrane region" description="Helical" evidence="2">
    <location>
        <begin position="98"/>
        <end position="118"/>
    </location>
</feature>
<feature type="topological domain" description="Extracellular" evidence="2">
    <location>
        <begin position="119"/>
        <end position="130"/>
    </location>
</feature>
<feature type="transmembrane region" description="Helical" evidence="2">
    <location>
        <begin position="131"/>
        <end position="151"/>
    </location>
</feature>
<feature type="topological domain" description="Cytoplasmic" evidence="2">
    <location>
        <begin position="152"/>
        <end position="159"/>
    </location>
</feature>
<feature type="transmembrane region" description="Helical" evidence="2">
    <location>
        <begin position="160"/>
        <end position="180"/>
    </location>
</feature>
<feature type="topological domain" description="Extracellular" evidence="2">
    <location>
        <begin position="181"/>
        <end position="193"/>
    </location>
</feature>
<feature type="transmembrane region" description="Helical" evidence="2">
    <location>
        <begin position="194"/>
        <end position="214"/>
    </location>
</feature>
<feature type="topological domain" description="Cytoplasmic" evidence="2">
    <location>
        <begin position="215"/>
        <end position="285"/>
    </location>
</feature>
<feature type="transmembrane region" description="Helical" evidence="2">
    <location>
        <begin position="286"/>
        <end position="306"/>
    </location>
</feature>
<feature type="topological domain" description="Extracellular" evidence="2">
    <location>
        <begin position="307"/>
        <end position="325"/>
    </location>
</feature>
<feature type="transmembrane region" description="Helical" evidence="2">
    <location>
        <begin position="326"/>
        <end position="346"/>
    </location>
</feature>
<feature type="topological domain" description="Cytoplasmic" evidence="2">
    <location>
        <begin position="347"/>
        <end position="352"/>
    </location>
</feature>
<feature type="transmembrane region" description="Helical" evidence="2">
    <location>
        <begin position="353"/>
        <end position="373"/>
    </location>
</feature>
<feature type="topological domain" description="Extracellular" evidence="2">
    <location>
        <begin position="374"/>
        <end position="387"/>
    </location>
</feature>
<feature type="transmembrane region" description="Helical" evidence="2">
    <location>
        <begin position="388"/>
        <end position="408"/>
    </location>
</feature>
<feature type="topological domain" description="Cytoplasmic" evidence="2">
    <location>
        <begin position="409"/>
        <end position="456"/>
    </location>
</feature>
<feature type="transmembrane region" description="Helical" evidence="2">
    <location>
        <begin position="457"/>
        <end position="477"/>
    </location>
</feature>
<feature type="topological domain" description="Extracellular" evidence="2">
    <location>
        <begin position="478"/>
        <end position="539"/>
    </location>
</feature>
<reference key="1">
    <citation type="journal article" date="2007" name="Nat. Biotechnol.">
        <title>Genome sequencing and analysis of the versatile cell factory Aspergillus niger CBS 513.88.</title>
        <authorList>
            <person name="Pel H.J."/>
            <person name="de Winde J.H."/>
            <person name="Archer D.B."/>
            <person name="Dyer P.S."/>
            <person name="Hofmann G."/>
            <person name="Schaap P.J."/>
            <person name="Turner G."/>
            <person name="de Vries R.P."/>
            <person name="Albang R."/>
            <person name="Albermann K."/>
            <person name="Andersen M.R."/>
            <person name="Bendtsen J.D."/>
            <person name="Benen J.A.E."/>
            <person name="van den Berg M."/>
            <person name="Breestraat S."/>
            <person name="Caddick M.X."/>
            <person name="Contreras R."/>
            <person name="Cornell M."/>
            <person name="Coutinho P.M."/>
            <person name="Danchin E.G.J."/>
            <person name="Debets A.J.M."/>
            <person name="Dekker P."/>
            <person name="van Dijck P.W.M."/>
            <person name="van Dijk A."/>
            <person name="Dijkhuizen L."/>
            <person name="Driessen A.J.M."/>
            <person name="d'Enfert C."/>
            <person name="Geysens S."/>
            <person name="Goosen C."/>
            <person name="Groot G.S.P."/>
            <person name="de Groot P.W.J."/>
            <person name="Guillemette T."/>
            <person name="Henrissat B."/>
            <person name="Herweijer M."/>
            <person name="van den Hombergh J.P.T.W."/>
            <person name="van den Hondel C.A.M.J.J."/>
            <person name="van der Heijden R.T.J.M."/>
            <person name="van der Kaaij R.M."/>
            <person name="Klis F.M."/>
            <person name="Kools H.J."/>
            <person name="Kubicek C.P."/>
            <person name="van Kuyk P.A."/>
            <person name="Lauber J."/>
            <person name="Lu X."/>
            <person name="van der Maarel M.J.E.C."/>
            <person name="Meulenberg R."/>
            <person name="Menke H."/>
            <person name="Mortimer M.A."/>
            <person name="Nielsen J."/>
            <person name="Oliver S.G."/>
            <person name="Olsthoorn M."/>
            <person name="Pal K."/>
            <person name="van Peij N.N.M.E."/>
            <person name="Ram A.F.J."/>
            <person name="Rinas U."/>
            <person name="Roubos J.A."/>
            <person name="Sagt C.M.J."/>
            <person name="Schmoll M."/>
            <person name="Sun J."/>
            <person name="Ussery D."/>
            <person name="Varga J."/>
            <person name="Vervecken W."/>
            <person name="van de Vondervoort P.J.J."/>
            <person name="Wedler H."/>
            <person name="Woesten H.A.B."/>
            <person name="Zeng A.-P."/>
            <person name="van Ooyen A.J.J."/>
            <person name="Visser J."/>
            <person name="Stam H."/>
        </authorList>
    </citation>
    <scope>NUCLEOTIDE SEQUENCE [LARGE SCALE GENOMIC DNA]</scope>
    <source>
        <strain>ATCC MYA-4892 / CBS 513.88 / FGSC A1513</strain>
    </source>
</reference>
<organism>
    <name type="scientific">Aspergillus niger (strain ATCC MYA-4892 / CBS 513.88 / FGSC A1513)</name>
    <dbReference type="NCBI Taxonomy" id="425011"/>
    <lineage>
        <taxon>Eukaryota</taxon>
        <taxon>Fungi</taxon>
        <taxon>Dikarya</taxon>
        <taxon>Ascomycota</taxon>
        <taxon>Pezizomycotina</taxon>
        <taxon>Eurotiomycetes</taxon>
        <taxon>Eurotiomycetidae</taxon>
        <taxon>Eurotiales</taxon>
        <taxon>Aspergillaceae</taxon>
        <taxon>Aspergillus</taxon>
        <taxon>Aspergillus subgen. Circumdati</taxon>
    </lineage>
</organism>
<sequence length="539" mass="60479">MSILSMVEDRPTPKEVYNWRIYLLAAVASFTSCMIGYDSAFIGTTISLDSFKNEFHWDSMSTAKQNLVSANIVSCYQAGAFFGAFFAYPIGHFWGRKWGLMLSALVFTLGAGLMLGANGDRGLGLIYGGRVLAGLGVGAGSNFTPIYISELAPPAIRGRLVGVYELGWQVGGLVGFWINYGVEQTMAPSHKQWLIPFAVQLIPAGLLIIGILFVKESPRWLFLRGRREEAIKNLCWIRQIPADHIYMIEEIGAIDQTLEHQRSTIGLGFWRPLKEAWTNKRILYRLFLGSMLFFWQNGSGINAINYYSPTVFKSIGLKGNSSSLLTTGIFGVVKTVVTIVWLLYLIDHVGRRLLLLIGAAGGSICMWIVGAYIKVVDPTHNQSDHLNGGGVAAIFFFYLWTAFYTPSWNGTPWVINSEMFDPNIRSLAQACAAGSNWLWNFLISRFTPQMFAKMDYGVYFFFASLMLLSIPFVFFLVPETKGIPLENMDPLFQTQPVWRAHAKVLAQIHEDEARFRRDLEESGYTKGNVEQVEDTDRKE</sequence>
<dbReference type="EMBL" id="AM270166">
    <property type="protein sequence ID" value="CAK39888.1"/>
    <property type="molecule type" value="Genomic_DNA"/>
</dbReference>
<dbReference type="RefSeq" id="XP_001392502.1">
    <property type="nucleotide sequence ID" value="XM_001392465.2"/>
</dbReference>
<dbReference type="SMR" id="A2QQV6"/>
<dbReference type="EnsemblFungi" id="CAK39888">
    <property type="protein sequence ID" value="CAK39888"/>
    <property type="gene ID" value="An08g03850"/>
</dbReference>
<dbReference type="GeneID" id="4982700"/>
<dbReference type="KEGG" id="ang:An08g03850"/>
<dbReference type="VEuPathDB" id="FungiDB:An08g03850"/>
<dbReference type="HOGENOM" id="CLU_001265_30_12_1"/>
<dbReference type="Proteomes" id="UP000006706">
    <property type="component" value="Chromosome 8R"/>
</dbReference>
<dbReference type="GO" id="GO:0005886">
    <property type="term" value="C:plasma membrane"/>
    <property type="evidence" value="ECO:0007669"/>
    <property type="project" value="UniProtKB-SubCell"/>
</dbReference>
<dbReference type="GO" id="GO:0005351">
    <property type="term" value="F:carbohydrate:proton symporter activity"/>
    <property type="evidence" value="ECO:0007669"/>
    <property type="project" value="TreeGrafter"/>
</dbReference>
<dbReference type="GO" id="GO:0019630">
    <property type="term" value="P:quinate metabolic process"/>
    <property type="evidence" value="ECO:0007669"/>
    <property type="project" value="UniProtKB-KW"/>
</dbReference>
<dbReference type="CDD" id="cd17356">
    <property type="entry name" value="MFS_HXT"/>
    <property type="match status" value="1"/>
</dbReference>
<dbReference type="FunFam" id="1.20.1250.20:FF:000026">
    <property type="entry name" value="MFS quinate transporter QutD"/>
    <property type="match status" value="1"/>
</dbReference>
<dbReference type="Gene3D" id="1.20.1250.20">
    <property type="entry name" value="MFS general substrate transporter like domains"/>
    <property type="match status" value="1"/>
</dbReference>
<dbReference type="InterPro" id="IPR020846">
    <property type="entry name" value="MFS_dom"/>
</dbReference>
<dbReference type="InterPro" id="IPR005828">
    <property type="entry name" value="MFS_sugar_transport-like"/>
</dbReference>
<dbReference type="InterPro" id="IPR050360">
    <property type="entry name" value="MFS_Sugar_Transporters"/>
</dbReference>
<dbReference type="InterPro" id="IPR036259">
    <property type="entry name" value="MFS_trans_sf"/>
</dbReference>
<dbReference type="InterPro" id="IPR003663">
    <property type="entry name" value="Sugar/inositol_transpt"/>
</dbReference>
<dbReference type="InterPro" id="IPR005829">
    <property type="entry name" value="Sugar_transporter_CS"/>
</dbReference>
<dbReference type="NCBIfam" id="TIGR00879">
    <property type="entry name" value="SP"/>
    <property type="match status" value="1"/>
</dbReference>
<dbReference type="PANTHER" id="PTHR48022:SF34">
    <property type="entry name" value="MAJOR FACILITATOR SUPERFAMILY (MFS) PROFILE DOMAIN-CONTAINING PROTEIN-RELATED"/>
    <property type="match status" value="1"/>
</dbReference>
<dbReference type="PANTHER" id="PTHR48022">
    <property type="entry name" value="PLASTIDIC GLUCOSE TRANSPORTER 4"/>
    <property type="match status" value="1"/>
</dbReference>
<dbReference type="Pfam" id="PF00083">
    <property type="entry name" value="Sugar_tr"/>
    <property type="match status" value="1"/>
</dbReference>
<dbReference type="PRINTS" id="PR00171">
    <property type="entry name" value="SUGRTRNSPORT"/>
</dbReference>
<dbReference type="SUPFAM" id="SSF103473">
    <property type="entry name" value="MFS general substrate transporter"/>
    <property type="match status" value="1"/>
</dbReference>
<dbReference type="PROSITE" id="PS50850">
    <property type="entry name" value="MFS"/>
    <property type="match status" value="1"/>
</dbReference>
<dbReference type="PROSITE" id="PS00216">
    <property type="entry name" value="SUGAR_TRANSPORT_1"/>
    <property type="match status" value="1"/>
</dbReference>
<dbReference type="PROSITE" id="PS00217">
    <property type="entry name" value="SUGAR_TRANSPORT_2"/>
    <property type="match status" value="1"/>
</dbReference>
<keyword id="KW-1003">Cell membrane</keyword>
<keyword id="KW-0472">Membrane</keyword>
<keyword id="KW-0672">Quinate metabolism</keyword>
<keyword id="KW-1185">Reference proteome</keyword>
<keyword id="KW-0812">Transmembrane</keyword>
<keyword id="KW-1133">Transmembrane helix</keyword>
<keyword id="KW-0813">Transport</keyword>
<keyword id="KW-0832">Ubl conjugation</keyword>
<accession>A2QQV6</accession>